<name>PCGF2_HUMAN</name>
<protein>
    <recommendedName>
        <fullName>Polycomb group RING finger protein 2</fullName>
    </recommendedName>
    <alternativeName>
        <fullName>DNA-binding protein Mel-18</fullName>
    </alternativeName>
    <alternativeName>
        <fullName>RING finger protein 110</fullName>
    </alternativeName>
    <alternativeName>
        <fullName>Zinc finger protein 144</fullName>
    </alternativeName>
</protein>
<feature type="chain" id="PRO_0000055984" description="Polycomb group RING finger protein 2">
    <location>
        <begin position="1"/>
        <end position="344"/>
    </location>
</feature>
<feature type="zinc finger region" description="RING-type" evidence="3">
    <location>
        <begin position="18"/>
        <end position="57"/>
    </location>
</feature>
<feature type="region of interest" description="Disordered" evidence="4">
    <location>
        <begin position="240"/>
        <end position="344"/>
    </location>
</feature>
<feature type="short sequence motif" description="Nuclear localization signal" evidence="2">
    <location>
        <begin position="81"/>
        <end position="95"/>
    </location>
</feature>
<feature type="compositionally biased region" description="Polar residues" evidence="4">
    <location>
        <begin position="240"/>
        <end position="253"/>
    </location>
</feature>
<feature type="compositionally biased region" description="Low complexity" evidence="4">
    <location>
        <begin position="263"/>
        <end position="313"/>
    </location>
</feature>
<feature type="compositionally biased region" description="Polar residues" evidence="4">
    <location>
        <begin position="314"/>
        <end position="328"/>
    </location>
</feature>
<feature type="modified residue" description="Phosphothreonine" evidence="9">
    <location>
        <position position="344"/>
    </location>
</feature>
<feature type="cross-link" description="Glycyl lysine isopeptide (Lys-Gly) (interchain with G-Cter in SUMO2)" evidence="10">
    <location>
        <position position="51"/>
    </location>
</feature>
<feature type="cross-link" description="Glycyl lysine isopeptide (Lys-Gly) (interchain with G-Cter in SUMO2)" evidence="10">
    <location>
        <position position="88"/>
    </location>
</feature>
<feature type="sequence variant" id="VAR_082085" description="In TPFS." evidence="8">
    <original>P</original>
    <variation>L</variation>
    <location>
        <position position="65"/>
    </location>
</feature>
<feature type="sequence variant" id="VAR_082086" description="In TPFS." evidence="8">
    <original>P</original>
    <variation>S</variation>
    <location>
        <position position="65"/>
    </location>
</feature>
<proteinExistence type="evidence at protein level"/>
<evidence type="ECO:0000250" key="1">
    <source>
        <dbReference type="UniProtKB" id="P23798"/>
    </source>
</evidence>
<evidence type="ECO:0000255" key="2"/>
<evidence type="ECO:0000255" key="3">
    <source>
        <dbReference type="PROSITE-ProRule" id="PRU00175"/>
    </source>
</evidence>
<evidence type="ECO:0000256" key="4">
    <source>
        <dbReference type="SAM" id="MobiDB-lite"/>
    </source>
</evidence>
<evidence type="ECO:0000269" key="5">
    <source>
    </source>
</evidence>
<evidence type="ECO:0000269" key="6">
    <source>
    </source>
</evidence>
<evidence type="ECO:0000269" key="7">
    <source>
    </source>
</evidence>
<evidence type="ECO:0000269" key="8">
    <source>
    </source>
</evidence>
<evidence type="ECO:0007744" key="9">
    <source>
    </source>
</evidence>
<evidence type="ECO:0007744" key="10">
    <source>
    </source>
</evidence>
<keyword id="KW-0225">Disease variant</keyword>
<keyword id="KW-0238">DNA-binding</keyword>
<keyword id="KW-0991">Intellectual disability</keyword>
<keyword id="KW-1017">Isopeptide bond</keyword>
<keyword id="KW-0479">Metal-binding</keyword>
<keyword id="KW-0539">Nucleus</keyword>
<keyword id="KW-0597">Phosphoprotein</keyword>
<keyword id="KW-1267">Proteomics identification</keyword>
<keyword id="KW-1185">Reference proteome</keyword>
<keyword id="KW-0678">Repressor</keyword>
<keyword id="KW-0804">Transcription</keyword>
<keyword id="KW-0805">Transcription regulation</keyword>
<keyword id="KW-0832">Ubl conjugation</keyword>
<keyword id="KW-0862">Zinc</keyword>
<keyword id="KW-0863">Zinc-finger</keyword>
<accession>P35227</accession>
<accession>A6NGD8</accession>
<comment type="function">
    <text evidence="1 7">Transcriptional repressor. Binds specifically to the DNA sequence 5'-GACTNGACT-3'. Has tumor suppressor activity. May play a role in control of cell proliferation and/or neural cell development. Regulates proliferation of early T progenitor cells by maintaining expression of HES1. Also plays a role in antero-posterior specification of the axial skeleton and negative regulation of the self-renewal activity of hematopoietic stem cells (By similarity). Component of a Polycomb group (PcG) multiprotein PRC1-like complex, a complex class required to maintain the transcriptionally repressive state of many genes, including Hox genes, throughout development. PcG PRC1 complex acts via chromatin remodeling and modification of histones; it mediates monoubiquitination of histone H2A 'Lys-119', rendering chromatin heritably changed in its expressibility (PubMed:26151332). Within the PRC1-like complex, regulates RNF2 ubiquitin ligase activity (PubMed:26151332).</text>
</comment>
<comment type="subunit">
    <text evidence="1 5 6">Exists as both a monomer and homodimer (By similarity). Component of a PRC1-like complex (PubMed:19636380, PubMed:21282530, PubMed:26151332). Interacts with CBX8, RING1 and RNF2 (PubMed:19636380). Interacts with CBX7 (By similarity). Interacts with PHC2 (By similarity).</text>
</comment>
<comment type="interaction">
    <interactant intactId="EBI-2129767">
        <id>P35227</id>
    </interactant>
    <interactant intactId="EBI-3951758">
        <id>O95503</id>
        <label>CBX6</label>
    </interactant>
    <organismsDiffer>false</organismsDiffer>
    <experiments>5</experiments>
</comment>
<comment type="interaction">
    <interactant intactId="EBI-2129767">
        <id>P35227</id>
    </interactant>
    <interactant intactId="EBI-3923843">
        <id>O95931</id>
        <label>CBX7</label>
    </interactant>
    <organismsDiffer>false</organismsDiffer>
    <experiments>8</experiments>
</comment>
<comment type="interaction">
    <interactant intactId="EBI-2129767">
        <id>P35227</id>
    </interactant>
    <interactant intactId="EBI-712912">
        <id>Q9HC52</id>
        <label>CBX8</label>
    </interactant>
    <organismsDiffer>false</organismsDiffer>
    <experiments>13</experiments>
</comment>
<comment type="interaction">
    <interactant intactId="EBI-2129767">
        <id>P35227</id>
    </interactant>
    <interactant intactId="EBI-1055820">
        <id>Q9HCE1</id>
        <label>MOV10</label>
    </interactant>
    <organismsDiffer>false</organismsDiffer>
    <experiments>2</experiments>
</comment>
<comment type="interaction">
    <interactant intactId="EBI-2129767">
        <id>P35227</id>
    </interactant>
    <interactant intactId="EBI-448407">
        <id>Q9HAT8</id>
        <label>PELI2</label>
    </interactant>
    <organismsDiffer>false</organismsDiffer>
    <experiments>3</experiments>
</comment>
<comment type="interaction">
    <interactant intactId="EBI-2129767">
        <id>P35227</id>
    </interactant>
    <interactant intactId="EBI-725403">
        <id>P78364</id>
        <label>PHC1</label>
    </interactant>
    <organismsDiffer>false</organismsDiffer>
    <experiments>13</experiments>
</comment>
<comment type="interaction">
    <interactant intactId="EBI-2129767">
        <id>P35227</id>
    </interactant>
    <interactant intactId="EBI-713786">
        <id>Q8IXK0</id>
        <label>PHC2</label>
    </interactant>
    <organismsDiffer>false</organismsDiffer>
    <experiments>10</experiments>
</comment>
<comment type="interaction">
    <interactant intactId="EBI-2129767">
        <id>P35227</id>
    </interactant>
    <interactant intactId="EBI-752313">
        <id>Q06587</id>
        <label>RING1</label>
    </interactant>
    <organismsDiffer>false</organismsDiffer>
    <experiments>15</experiments>
</comment>
<comment type="interaction">
    <interactant intactId="EBI-2129767">
        <id>P35227</id>
    </interactant>
    <interactant intactId="EBI-722416">
        <id>Q99496</id>
        <label>RNF2</label>
    </interactant>
    <organismsDiffer>false</organismsDiffer>
    <experiments>18</experiments>
</comment>
<comment type="interaction">
    <interactant intactId="EBI-2129767">
        <id>P35227</id>
    </interactant>
    <interactant intactId="EBI-11956649">
        <id>P32856-2</id>
        <label>STX2</label>
    </interactant>
    <organismsDiffer>false</organismsDiffer>
    <experiments>3</experiments>
</comment>
<comment type="interaction">
    <interactant intactId="EBI-2129767">
        <id>P35227</id>
    </interactant>
    <interactant intactId="EBI-355744">
        <id>Q12933</id>
        <label>TRAF2</label>
    </interactant>
    <organismsDiffer>false</organismsDiffer>
    <experiments>3</experiments>
</comment>
<comment type="interaction">
    <interactant intactId="EBI-2129767">
        <id>P35227</id>
    </interactant>
    <interactant intactId="EBI-3390054">
        <id>P0CG48</id>
        <label>UBC</label>
    </interactant>
    <organismsDiffer>false</organismsDiffer>
    <experiments>2</experiments>
</comment>
<comment type="interaction">
    <interactant intactId="EBI-2129767">
        <id>P35227</id>
    </interactant>
    <interactant intactId="EBI-306876">
        <id>P51784</id>
        <label>USP11</label>
    </interactant>
    <organismsDiffer>false</organismsDiffer>
    <experiments>5</experiments>
</comment>
<comment type="interaction">
    <interactant intactId="EBI-2129767">
        <id>P35227</id>
    </interactant>
    <interactant intactId="EBI-302474">
        <id>Q93009</id>
        <label>USP7</label>
    </interactant>
    <organismsDiffer>false</organismsDiffer>
    <experiments>5</experiments>
</comment>
<comment type="subcellular location">
    <subcellularLocation>
        <location evidence="6">Nucleus</location>
    </subcellularLocation>
</comment>
<comment type="tissue specificity">
    <text>Detected in all tissues examined with high expression found in placenta lung and kidney and low expression, in liver, pancreas and skeletal muscle.</text>
</comment>
<comment type="PTM">
    <text evidence="1">Phosphorylated. Homodimer formation is regulated by phosphorylation with only unphosphorylated proteins forming homodimers.</text>
</comment>
<comment type="disease" evidence="8">
    <disease id="DI-05516">
        <name>Turnpenny-Fry syndrome</name>
        <acronym>TPFS</acronym>
        <description>A syndrome characterized by facial dysmorphism, intellectual disability, feeding problems, impaired growth, and a range of brain, cardiovascular, and skeletal abnormalities. Craniofacial features include frontal bossing, sparse hair, malar hypoplasia, small palpebral fissures and oral stoma, and dysplastic ears.</description>
        <dbReference type="MIM" id="618371"/>
    </disease>
    <text>The disease is caused by variants affecting the gene represented in this entry.</text>
</comment>
<reference key="1">
    <citation type="journal article" date="1993" name="Gene">
        <title>Cloning and chromosome mapping of the human Mel-18 gene which encodes a DNA-binding protein with a new 'RING-finger' motif.</title>
        <authorList>
            <person name="Ishida A."/>
            <person name="Asano H."/>
            <person name="Hasegawa M."/>
            <person name="Koseki H."/>
            <person name="Ono T."/>
            <person name="Yoshida M.C."/>
            <person name="Taniguchi M."/>
            <person name="Kanno M."/>
        </authorList>
    </citation>
    <scope>NUCLEOTIDE SEQUENCE [MRNA]</scope>
</reference>
<reference key="2">
    <citation type="journal article" date="2007" name="BMC Genomics">
        <title>The full-ORF clone resource of the German cDNA consortium.</title>
        <authorList>
            <person name="Bechtel S."/>
            <person name="Rosenfelder H."/>
            <person name="Duda A."/>
            <person name="Schmidt C.P."/>
            <person name="Ernst U."/>
            <person name="Wellenreuther R."/>
            <person name="Mehrle A."/>
            <person name="Schuster C."/>
            <person name="Bahr A."/>
            <person name="Bloecker H."/>
            <person name="Heubner D."/>
            <person name="Hoerlein A."/>
            <person name="Michel G."/>
            <person name="Wedler H."/>
            <person name="Koehrer K."/>
            <person name="Ottenwaelder B."/>
            <person name="Poustka A."/>
            <person name="Wiemann S."/>
            <person name="Schupp I."/>
        </authorList>
    </citation>
    <scope>NUCLEOTIDE SEQUENCE [LARGE SCALE MRNA]</scope>
    <source>
        <tissue>Colon endothelium</tissue>
    </source>
</reference>
<reference key="3">
    <citation type="journal article" date="2006" name="Nature">
        <title>DNA sequence of human chromosome 17 and analysis of rearrangement in the human lineage.</title>
        <authorList>
            <person name="Zody M.C."/>
            <person name="Garber M."/>
            <person name="Adams D.J."/>
            <person name="Sharpe T."/>
            <person name="Harrow J."/>
            <person name="Lupski J.R."/>
            <person name="Nicholson C."/>
            <person name="Searle S.M."/>
            <person name="Wilming L."/>
            <person name="Young S.K."/>
            <person name="Abouelleil A."/>
            <person name="Allen N.R."/>
            <person name="Bi W."/>
            <person name="Bloom T."/>
            <person name="Borowsky M.L."/>
            <person name="Bugalter B.E."/>
            <person name="Butler J."/>
            <person name="Chang J.L."/>
            <person name="Chen C.-K."/>
            <person name="Cook A."/>
            <person name="Corum B."/>
            <person name="Cuomo C.A."/>
            <person name="de Jong P.J."/>
            <person name="DeCaprio D."/>
            <person name="Dewar K."/>
            <person name="FitzGerald M."/>
            <person name="Gilbert J."/>
            <person name="Gibson R."/>
            <person name="Gnerre S."/>
            <person name="Goldstein S."/>
            <person name="Grafham D.V."/>
            <person name="Grocock R."/>
            <person name="Hafez N."/>
            <person name="Hagopian D.S."/>
            <person name="Hart E."/>
            <person name="Norman C.H."/>
            <person name="Humphray S."/>
            <person name="Jaffe D.B."/>
            <person name="Jones M."/>
            <person name="Kamal M."/>
            <person name="Khodiyar V.K."/>
            <person name="LaButti K."/>
            <person name="Laird G."/>
            <person name="Lehoczky J."/>
            <person name="Liu X."/>
            <person name="Lokyitsang T."/>
            <person name="Loveland J."/>
            <person name="Lui A."/>
            <person name="Macdonald P."/>
            <person name="Major J.E."/>
            <person name="Matthews L."/>
            <person name="Mauceli E."/>
            <person name="McCarroll S.A."/>
            <person name="Mihalev A.H."/>
            <person name="Mudge J."/>
            <person name="Nguyen C."/>
            <person name="Nicol R."/>
            <person name="O'Leary S.B."/>
            <person name="Osoegawa K."/>
            <person name="Schwartz D.C."/>
            <person name="Shaw-Smith C."/>
            <person name="Stankiewicz P."/>
            <person name="Steward C."/>
            <person name="Swarbreck D."/>
            <person name="Venkataraman V."/>
            <person name="Whittaker C.A."/>
            <person name="Yang X."/>
            <person name="Zimmer A.R."/>
            <person name="Bradley A."/>
            <person name="Hubbard T."/>
            <person name="Birren B.W."/>
            <person name="Rogers J."/>
            <person name="Lander E.S."/>
            <person name="Nusbaum C."/>
        </authorList>
    </citation>
    <scope>NUCLEOTIDE SEQUENCE [LARGE SCALE GENOMIC DNA]</scope>
</reference>
<reference key="4">
    <citation type="submission" date="2005-07" db="EMBL/GenBank/DDBJ databases">
        <authorList>
            <person name="Mural R.J."/>
            <person name="Istrail S."/>
            <person name="Sutton G.G."/>
            <person name="Florea L."/>
            <person name="Halpern A.L."/>
            <person name="Mobarry C.M."/>
            <person name="Lippert R."/>
            <person name="Walenz B."/>
            <person name="Shatkay H."/>
            <person name="Dew I."/>
            <person name="Miller J.R."/>
            <person name="Flanigan M.J."/>
            <person name="Edwards N.J."/>
            <person name="Bolanos R."/>
            <person name="Fasulo D."/>
            <person name="Halldorsson B.V."/>
            <person name="Hannenhalli S."/>
            <person name="Turner R."/>
            <person name="Yooseph S."/>
            <person name="Lu F."/>
            <person name="Nusskern D.R."/>
            <person name="Shue B.C."/>
            <person name="Zheng X.H."/>
            <person name="Zhong F."/>
            <person name="Delcher A.L."/>
            <person name="Huson D.H."/>
            <person name="Kravitz S.A."/>
            <person name="Mouchard L."/>
            <person name="Reinert K."/>
            <person name="Remington K.A."/>
            <person name="Clark A.G."/>
            <person name="Waterman M.S."/>
            <person name="Eichler E.E."/>
            <person name="Adams M.D."/>
            <person name="Hunkapiller M.W."/>
            <person name="Myers E.W."/>
            <person name="Venter J.C."/>
        </authorList>
    </citation>
    <scope>NUCLEOTIDE SEQUENCE [LARGE SCALE GENOMIC DNA]</scope>
</reference>
<reference key="5">
    <citation type="journal article" date="2004" name="Genome Res.">
        <title>The status, quality, and expansion of the NIH full-length cDNA project: the Mammalian Gene Collection (MGC).</title>
        <authorList>
            <consortium name="The MGC Project Team"/>
        </authorList>
    </citation>
    <scope>NUCLEOTIDE SEQUENCE [LARGE SCALE MRNA]</scope>
    <source>
        <tissue>Placenta</tissue>
        <tissue>Uterus</tissue>
    </source>
</reference>
<reference key="6">
    <citation type="journal article" date="2008" name="Proc. Natl. Acad. Sci. U.S.A.">
        <title>A quantitative atlas of mitotic phosphorylation.</title>
        <authorList>
            <person name="Dephoure N."/>
            <person name="Zhou C."/>
            <person name="Villen J."/>
            <person name="Beausoleil S.A."/>
            <person name="Bakalarski C.E."/>
            <person name="Elledge S.J."/>
            <person name="Gygi S.P."/>
        </authorList>
    </citation>
    <scope>PHOSPHORYLATION [LARGE SCALE ANALYSIS] AT THR-344</scope>
    <scope>IDENTIFICATION BY MASS SPECTROMETRY [LARGE SCALE ANALYSIS]</scope>
    <source>
        <tissue>Cervix carcinoma</tissue>
    </source>
</reference>
<reference key="7">
    <citation type="journal article" date="2009" name="PLoS ONE">
        <title>Several distinct polycomb complexes regulate and co-localize on the INK4a tumor suppressor locus.</title>
        <authorList>
            <person name="Maertens G.N."/>
            <person name="El Messaoudi-Aubert S."/>
            <person name="Racek T."/>
            <person name="Stock J.K."/>
            <person name="Nicholls J."/>
            <person name="Rodriguez-Niedenfuhr M."/>
            <person name="Gil J."/>
            <person name="Peters G."/>
        </authorList>
    </citation>
    <scope>IDENTIFICATION IN A PRC1-LIKE COMPLEX</scope>
    <scope>INTERACTION WITH CBX8; RING1 AND RNF2</scope>
</reference>
<reference key="8">
    <citation type="journal article" date="2011" name="Mol. Cell. Proteomics">
        <title>Interaction proteomics analysis of polycomb proteins defines distinct PRC1 Complexes in mammalian cells.</title>
        <authorList>
            <person name="Vandamme J."/>
            <person name="Volkel P."/>
            <person name="Rosnoblet C."/>
            <person name="Le Faou P."/>
            <person name="Angrand P.O."/>
        </authorList>
    </citation>
    <scope>IDENTIFICATION IN A PRC1-LIKE COMPLEX</scope>
    <scope>SUBCELLULAR LOCATION</scope>
</reference>
<reference key="9">
    <citation type="journal article" date="2015" name="Nat. Commun.">
        <title>BMI1-RING1B is an autoinhibited RING E3 ubiquitin ligase.</title>
        <authorList>
            <person name="Taherbhoy A.M."/>
            <person name="Huang O.W."/>
            <person name="Cochran A.G."/>
        </authorList>
    </citation>
    <scope>FUNCTION</scope>
    <scope>SUBUNIT</scope>
</reference>
<reference key="10">
    <citation type="journal article" date="2017" name="Nat. Struct. Mol. Biol.">
        <title>Site-specific mapping of the human SUMO proteome reveals co-modification with phosphorylation.</title>
        <authorList>
            <person name="Hendriks I.A."/>
            <person name="Lyon D."/>
            <person name="Young C."/>
            <person name="Jensen L.J."/>
            <person name="Vertegaal A.C."/>
            <person name="Nielsen M.L."/>
        </authorList>
    </citation>
    <scope>SUMOYLATION [LARGE SCALE ANALYSIS] AT LYS-51 AND LYS-88</scope>
    <scope>IDENTIFICATION BY MASS SPECTROMETRY [LARGE SCALE ANALYSIS]</scope>
</reference>
<reference key="11">
    <citation type="journal article" date="2018" name="Am. J. Hum. Genet.">
        <title>Missense mutations of the Pro65 residue of PCGF2 cause a recognizable syndrome associated with craniofacial, neurological, cardiovascular, and skeletal features.</title>
        <authorList>
            <person name="Turnpenny P.D."/>
            <person name="Wright M.J."/>
            <person name="Sloman M."/>
            <person name="Caswell R."/>
            <person name="van Essen A.J."/>
            <person name="Gerkes E."/>
            <person name="Pfundt R."/>
            <person name="White S.M."/>
            <person name="Shaul-Lotan N."/>
            <person name="Carpenter L."/>
            <person name="Schaefer G.B."/>
            <person name="Fryer A."/>
            <person name="Innes A.M."/>
            <person name="Forbes K.P."/>
            <person name="Chung W.K."/>
            <person name="McLaughlin H."/>
            <person name="Henderson L.B."/>
            <person name="Roberts A.E."/>
            <person name="Heath K.E."/>
            <person name="Paumard-Hernandez B."/>
            <person name="Gener B."/>
            <person name="Fawcett K.A."/>
            <person name="Gjergja-Juraski R."/>
            <person name="Pilz D.T."/>
            <person name="Fry A.E."/>
        </authorList>
    </citation>
    <scope>INVOLVEMENT IN TPFS</scope>
    <scope>VARIANTS TPFS LEU-65 AND SER-65</scope>
</reference>
<organism>
    <name type="scientific">Homo sapiens</name>
    <name type="common">Human</name>
    <dbReference type="NCBI Taxonomy" id="9606"/>
    <lineage>
        <taxon>Eukaryota</taxon>
        <taxon>Metazoa</taxon>
        <taxon>Chordata</taxon>
        <taxon>Craniata</taxon>
        <taxon>Vertebrata</taxon>
        <taxon>Euteleostomi</taxon>
        <taxon>Mammalia</taxon>
        <taxon>Eutheria</taxon>
        <taxon>Euarchontoglires</taxon>
        <taxon>Primates</taxon>
        <taxon>Haplorrhini</taxon>
        <taxon>Catarrhini</taxon>
        <taxon>Hominidae</taxon>
        <taxon>Homo</taxon>
    </lineage>
</organism>
<dbReference type="EMBL" id="D13969">
    <property type="protein sequence ID" value="BAA03074.1"/>
    <property type="molecule type" value="mRNA"/>
</dbReference>
<dbReference type="EMBL" id="BX647429">
    <property type="status" value="NOT_ANNOTATED_CDS"/>
    <property type="molecule type" value="mRNA"/>
</dbReference>
<dbReference type="EMBL" id="AC006449">
    <property type="status" value="NOT_ANNOTATED_CDS"/>
    <property type="molecule type" value="Genomic_DNA"/>
</dbReference>
<dbReference type="EMBL" id="CH471152">
    <property type="protein sequence ID" value="EAW60528.1"/>
    <property type="molecule type" value="Genomic_DNA"/>
</dbReference>
<dbReference type="EMBL" id="BC004858">
    <property type="protein sequence ID" value="AAH04858.1"/>
    <property type="molecule type" value="mRNA"/>
</dbReference>
<dbReference type="EMBL" id="BC024255">
    <property type="protein sequence ID" value="AAH24255.1"/>
    <property type="molecule type" value="mRNA"/>
</dbReference>
<dbReference type="CCDS" id="CCDS32638.1"/>
<dbReference type="PIR" id="JN0717">
    <property type="entry name" value="JN0717"/>
</dbReference>
<dbReference type="RefSeq" id="NP_001356543.1">
    <property type="nucleotide sequence ID" value="NM_001369614.1"/>
</dbReference>
<dbReference type="RefSeq" id="NP_001356544.1">
    <property type="nucleotide sequence ID" value="NM_001369615.1"/>
</dbReference>
<dbReference type="RefSeq" id="NP_009075.1">
    <property type="nucleotide sequence ID" value="NM_007144.3"/>
</dbReference>
<dbReference type="RefSeq" id="XP_005257697.1">
    <property type="nucleotide sequence ID" value="XM_005257640.2"/>
</dbReference>
<dbReference type="RefSeq" id="XP_005257698.1">
    <property type="nucleotide sequence ID" value="XM_005257641.4"/>
</dbReference>
<dbReference type="RefSeq" id="XP_005257699.1">
    <property type="nucleotide sequence ID" value="XM_005257642.3"/>
</dbReference>
<dbReference type="RefSeq" id="XP_016880505.1">
    <property type="nucleotide sequence ID" value="XM_017025016.2"/>
</dbReference>
<dbReference type="RefSeq" id="XP_047292616.1">
    <property type="nucleotide sequence ID" value="XM_047436660.1"/>
</dbReference>
<dbReference type="RefSeq" id="XP_047292617.1">
    <property type="nucleotide sequence ID" value="XM_047436661.1"/>
</dbReference>
<dbReference type="RefSeq" id="XP_054185306.1">
    <property type="nucleotide sequence ID" value="XM_054329331.1"/>
</dbReference>
<dbReference type="SMR" id="P35227"/>
<dbReference type="BioGRID" id="113497">
    <property type="interactions" value="94"/>
</dbReference>
<dbReference type="ComplexPortal" id="CPX-2260">
    <property type="entry name" value="Non-canonical polycomb repressive complex 1.2, RING1-YAF2 variant"/>
</dbReference>
<dbReference type="ComplexPortal" id="CPX-2276">
    <property type="entry name" value="Non-canonical polycomb repressive complex 1.2, RNF2-RYBP variant"/>
</dbReference>
<dbReference type="ComplexPortal" id="CPX-2280">
    <property type="entry name" value="Non-canonical polycomb repressive complex 1.2, RNF2-YAF2 variant"/>
</dbReference>
<dbReference type="ComplexPortal" id="CPX-2480">
    <property type="entry name" value="Polycomb repressive complex 1, RING1-PCGF2-CBX2-PHC3 variant"/>
</dbReference>
<dbReference type="ComplexPortal" id="CPX-2594">
    <property type="entry name" value="Polycomb repressive complex 1, RING1-PCGF2-CBX4-PHC1 variant"/>
</dbReference>
<dbReference type="ComplexPortal" id="CPX-2598">
    <property type="entry name" value="Polycomb repressive complex 1, RING1-PCGF2-CBX6-PHC3 variant"/>
</dbReference>
<dbReference type="ComplexPortal" id="CPX-2600">
    <property type="entry name" value="Polycomb repressive complex 1, RING1-PCGF2-CBX7-PHC1 variant"/>
</dbReference>
<dbReference type="ComplexPortal" id="CPX-2601">
    <property type="entry name" value="Polycomb repressive complex 1, RING1-PCGF2-CBX7-PHC2 variant"/>
</dbReference>
<dbReference type="ComplexPortal" id="CPX-2605">
    <property type="entry name" value="Polycomb repressive complex 1, RING1-PCGF2-CBX2-PHC1 variant"/>
</dbReference>
<dbReference type="ComplexPortal" id="CPX-2609">
    <property type="entry name" value="Polycomb repressive complex 1, RING1-PCGF2-CBX2-PHC2 variant"/>
</dbReference>
<dbReference type="ComplexPortal" id="CPX-2613">
    <property type="entry name" value="Polycomb repressive complex 1, RING1-PCGF2-CBX4-PHC2 variant"/>
</dbReference>
<dbReference type="ComplexPortal" id="CPX-2615">
    <property type="entry name" value="Polycomb repressive complex 1, RING1-PCGF2-CBX4-PHC3 variant"/>
</dbReference>
<dbReference type="ComplexPortal" id="CPX-2616">
    <property type="entry name" value="Polycomb repressive complex 1, RING1-PCGF2-CBX6-PHC1 variant"/>
</dbReference>
<dbReference type="ComplexPortal" id="CPX-2617">
    <property type="entry name" value="Polycomb repressive complex 1, RING1-PCGF2-CBX6-PHC2 variant"/>
</dbReference>
<dbReference type="ComplexPortal" id="CPX-2619">
    <property type="entry name" value="Polycomb repressive complex 1, RING1-PCGF2-CBX7-PHC3 variant"/>
</dbReference>
<dbReference type="ComplexPortal" id="CPX-2621">
    <property type="entry name" value="Polycomb repressive complex 1, RING1-PCGF2-CBX8-PHC1 variant"/>
</dbReference>
<dbReference type="ComplexPortal" id="CPX-2622">
    <property type="entry name" value="Polycomb repressive complex 1, RING1-PCGF2-CBX8-PHC2 variant"/>
</dbReference>
<dbReference type="ComplexPortal" id="CPX-2623">
    <property type="entry name" value="Polycomb repressive complex 1, RING1-PCGF2-CBX8-PHC3 variant"/>
</dbReference>
<dbReference type="ComplexPortal" id="CPX-2630">
    <property type="entry name" value="Non-canonical polycomb repressive complex 1.2, RING1-RYBP variant"/>
</dbReference>
<dbReference type="ComplexPortal" id="CPX-7519">
    <property type="entry name" value="Polycomb repressive complex 1, RING2-PCGF2-CBX2-PHC1 variant"/>
</dbReference>
<dbReference type="ComplexPortal" id="CPX-7522">
    <property type="entry name" value="Polycomb repressive complex 1, RING2-PCGF2-CBX2-PHC2 variant"/>
</dbReference>
<dbReference type="ComplexPortal" id="CPX-7523">
    <property type="entry name" value="Polycomb repressive complex 1, RING2-PCGF2-CBX2-PHC3 variant"/>
</dbReference>
<dbReference type="ComplexPortal" id="CPX-7524">
    <property type="entry name" value="Polycomb repressive complex 1, RING2-PCGF2-CBX4-PHC1 variant"/>
</dbReference>
<dbReference type="ComplexPortal" id="CPX-7525">
    <property type="entry name" value="Polycomb repressive complex 1, RING2-PCGF2-CBX4-PHC3 variant"/>
</dbReference>
<dbReference type="ComplexPortal" id="CPX-7526">
    <property type="entry name" value="Polycomb repressive complex 1, RING2-PCGF2-CBX4-PHC2 variant"/>
</dbReference>
<dbReference type="ComplexPortal" id="CPX-7527">
    <property type="entry name" value="Polycomb repressive complex 1, RING2-PCGF2-CBX6-PHC1 variant"/>
</dbReference>
<dbReference type="ComplexPortal" id="CPX-7528">
    <property type="entry name" value="Polycomb repressive complex 1, RING2-PCGF2-CBX6-PHC2 variant"/>
</dbReference>
<dbReference type="ComplexPortal" id="CPX-7529">
    <property type="entry name" value="Polycomb repressive complex 1, RING2-PCGF2-CBX6-PHC3 variant"/>
</dbReference>
<dbReference type="ComplexPortal" id="CPX-7530">
    <property type="entry name" value="Polycomb repressive complex 1, RING2-PCGF2-CBX7-PHC1 variant"/>
</dbReference>
<dbReference type="ComplexPortal" id="CPX-7531">
    <property type="entry name" value="Polycomb repressive complex 1, RING2-PCGF2-CBX7-PHC2 variant"/>
</dbReference>
<dbReference type="ComplexPortal" id="CPX-7532">
    <property type="entry name" value="Polycomb repressive complex 1, RING2-PCGF2-CBX7-PHC3 variant"/>
</dbReference>
<dbReference type="ComplexPortal" id="CPX-7533">
    <property type="entry name" value="Polycomb repressive complex 1, RING2-PCGF2-CBX8-PHC1 variant"/>
</dbReference>
<dbReference type="ComplexPortal" id="CPX-7534">
    <property type="entry name" value="Polycomb repressive complex 1, RING2-PCGF2-CBX8-PHC2 variant"/>
</dbReference>
<dbReference type="ComplexPortal" id="CPX-7535">
    <property type="entry name" value="Polycomb repressive complex 1, RING2-PCGF2-CBX8-PHC3 variant"/>
</dbReference>
<dbReference type="CORUM" id="P35227"/>
<dbReference type="DIP" id="DIP-41880N"/>
<dbReference type="FunCoup" id="P35227">
    <property type="interactions" value="814"/>
</dbReference>
<dbReference type="IntAct" id="P35227">
    <property type="interactions" value="55"/>
</dbReference>
<dbReference type="MINT" id="P35227"/>
<dbReference type="STRING" id="9606.ENSP00000482063"/>
<dbReference type="GlyGen" id="P35227">
    <property type="glycosylation" value="4 sites, 1 O-linked glycan (1 site)"/>
</dbReference>
<dbReference type="iPTMnet" id="P35227"/>
<dbReference type="PhosphoSitePlus" id="P35227"/>
<dbReference type="BioMuta" id="PCGF2"/>
<dbReference type="DMDM" id="462585"/>
<dbReference type="jPOST" id="P35227"/>
<dbReference type="MassIVE" id="P35227"/>
<dbReference type="PaxDb" id="9606-ENSP00000482063"/>
<dbReference type="PeptideAtlas" id="P35227"/>
<dbReference type="ProteomicsDB" id="54992"/>
<dbReference type="Pumba" id="P35227"/>
<dbReference type="Antibodypedia" id="72907">
    <property type="antibodies" value="248 antibodies from 34 providers"/>
</dbReference>
<dbReference type="DNASU" id="7703"/>
<dbReference type="Ensembl" id="ENST00000610440.1">
    <property type="protein sequence ID" value="ENSP00000478517.1"/>
    <property type="gene ID" value="ENSG00000278644.2"/>
</dbReference>
<dbReference type="Ensembl" id="ENST00000611883.4">
    <property type="protein sequence ID" value="ENSP00000478970.1"/>
    <property type="gene ID" value="ENSG00000277258.5"/>
</dbReference>
<dbReference type="Ensembl" id="ENST00000616199.4">
    <property type="protein sequence ID" value="ENSP00000482063.1"/>
    <property type="gene ID" value="ENSG00000277258.5"/>
</dbReference>
<dbReference type="Ensembl" id="ENST00000620225.5">
    <property type="protein sequence ID" value="ENSP00000482815.1"/>
    <property type="gene ID" value="ENSG00000277258.5"/>
</dbReference>
<dbReference type="Ensembl" id="ENST00000631566.1">
    <property type="protein sequence ID" value="ENSP00000488872.1"/>
    <property type="gene ID" value="ENSG00000278644.2"/>
</dbReference>
<dbReference type="Ensembl" id="ENST00000631610.1">
    <property type="protein sequence ID" value="ENSP00000488868.1"/>
    <property type="gene ID" value="ENSG00000278644.2"/>
</dbReference>
<dbReference type="GeneID" id="7703"/>
<dbReference type="KEGG" id="hsa:7703"/>
<dbReference type="MANE-Select" id="ENST00000620225.5">
    <property type="protein sequence ID" value="ENSP00000482815.1"/>
    <property type="RefSeq nucleotide sequence ID" value="NM_007144.3"/>
    <property type="RefSeq protein sequence ID" value="NP_009075.1"/>
</dbReference>
<dbReference type="UCSC" id="uc002hqp.2">
    <property type="organism name" value="human"/>
</dbReference>
<dbReference type="AGR" id="HGNC:12929"/>
<dbReference type="CTD" id="7703"/>
<dbReference type="DisGeNET" id="7703"/>
<dbReference type="GeneCards" id="PCGF2"/>
<dbReference type="HGNC" id="HGNC:12929">
    <property type="gene designation" value="PCGF2"/>
</dbReference>
<dbReference type="HPA" id="ENSG00000277258">
    <property type="expression patterns" value="Low tissue specificity"/>
</dbReference>
<dbReference type="MalaCards" id="PCGF2"/>
<dbReference type="MIM" id="600346">
    <property type="type" value="gene"/>
</dbReference>
<dbReference type="MIM" id="618371">
    <property type="type" value="phenotype"/>
</dbReference>
<dbReference type="neXtProt" id="NX_P35227"/>
<dbReference type="OpenTargets" id="ENSG00000277258"/>
<dbReference type="Orphanet" id="688642">
    <property type="disease" value="Turnpenny-Fry syndrome"/>
</dbReference>
<dbReference type="PharmGKB" id="PA37516"/>
<dbReference type="VEuPathDB" id="HostDB:ENSG00000277258"/>
<dbReference type="eggNOG" id="KOG2660">
    <property type="taxonomic scope" value="Eukaryota"/>
</dbReference>
<dbReference type="GeneTree" id="ENSGT00940000159730"/>
<dbReference type="HOGENOM" id="CLU_046427_0_0_1"/>
<dbReference type="InParanoid" id="P35227"/>
<dbReference type="OMA" id="NGNTNCH"/>
<dbReference type="OrthoDB" id="1305878at2759"/>
<dbReference type="PAN-GO" id="P35227">
    <property type="GO annotations" value="4 GO annotations based on evolutionary models"/>
</dbReference>
<dbReference type="PhylomeDB" id="P35227"/>
<dbReference type="TreeFam" id="TF324206"/>
<dbReference type="PathwayCommons" id="P35227"/>
<dbReference type="Reactome" id="R-HSA-3108214">
    <property type="pathway name" value="SUMOylation of DNA damage response and repair proteins"/>
</dbReference>
<dbReference type="Reactome" id="R-HSA-3899300">
    <property type="pathway name" value="SUMOylation of transcription cofactors"/>
</dbReference>
<dbReference type="Reactome" id="R-HSA-4551638">
    <property type="pathway name" value="SUMOylation of chromatin organization proteins"/>
</dbReference>
<dbReference type="Reactome" id="R-HSA-4570464">
    <property type="pathway name" value="SUMOylation of RNA binding proteins"/>
</dbReference>
<dbReference type="Reactome" id="R-HSA-4655427">
    <property type="pathway name" value="SUMOylation of DNA methylation proteins"/>
</dbReference>
<dbReference type="Reactome" id="R-HSA-5617472">
    <property type="pathway name" value="Activation of anterior HOX genes in hindbrain development during early embryogenesis"/>
</dbReference>
<dbReference type="Reactome" id="R-HSA-8953750">
    <property type="pathway name" value="Transcriptional Regulation by E2F6"/>
</dbReference>
<dbReference type="SignaLink" id="P35227"/>
<dbReference type="SIGNOR" id="P35227"/>
<dbReference type="BioGRID-ORCS" id="7703">
    <property type="hits" value="20 hits in 1204 CRISPR screens"/>
</dbReference>
<dbReference type="ChiTaRS" id="PCGF2">
    <property type="organism name" value="human"/>
</dbReference>
<dbReference type="GeneWiki" id="PCGF2"/>
<dbReference type="GenomeRNAi" id="7703"/>
<dbReference type="Pharos" id="P35227">
    <property type="development level" value="Tbio"/>
</dbReference>
<dbReference type="PRO" id="PR:P35227"/>
<dbReference type="Proteomes" id="UP000005640">
    <property type="component" value="Chromosome 17"/>
</dbReference>
<dbReference type="RNAct" id="P35227">
    <property type="molecule type" value="protein"/>
</dbReference>
<dbReference type="Bgee" id="ENSG00000277258">
    <property type="expression patterns" value="Expressed in cortical plate and 96 other cell types or tissues"/>
</dbReference>
<dbReference type="ExpressionAtlas" id="P35227">
    <property type="expression patterns" value="baseline and differential"/>
</dbReference>
<dbReference type="GO" id="GO:0000785">
    <property type="term" value="C:chromatin"/>
    <property type="evidence" value="ECO:0000314"/>
    <property type="project" value="UniProtKB"/>
</dbReference>
<dbReference type="GO" id="GO:0016604">
    <property type="term" value="C:nuclear body"/>
    <property type="evidence" value="ECO:0007669"/>
    <property type="project" value="Ensembl"/>
</dbReference>
<dbReference type="GO" id="GO:0005654">
    <property type="term" value="C:nucleoplasm"/>
    <property type="evidence" value="ECO:0000314"/>
    <property type="project" value="HPA"/>
</dbReference>
<dbReference type="GO" id="GO:0005634">
    <property type="term" value="C:nucleus"/>
    <property type="evidence" value="ECO:0000314"/>
    <property type="project" value="UniProtKB"/>
</dbReference>
<dbReference type="GO" id="GO:0031519">
    <property type="term" value="C:PcG protein complex"/>
    <property type="evidence" value="ECO:0000314"/>
    <property type="project" value="UniProtKB"/>
</dbReference>
<dbReference type="GO" id="GO:0035102">
    <property type="term" value="C:PRC1 complex"/>
    <property type="evidence" value="ECO:0000314"/>
    <property type="project" value="UniProtKB"/>
</dbReference>
<dbReference type="GO" id="GO:0001739">
    <property type="term" value="C:sex chromatin"/>
    <property type="evidence" value="ECO:0007669"/>
    <property type="project" value="Ensembl"/>
</dbReference>
<dbReference type="GO" id="GO:0003677">
    <property type="term" value="F:DNA binding"/>
    <property type="evidence" value="ECO:0007669"/>
    <property type="project" value="UniProtKB-KW"/>
</dbReference>
<dbReference type="GO" id="GO:1990841">
    <property type="term" value="F:promoter-specific chromatin binding"/>
    <property type="evidence" value="ECO:0000318"/>
    <property type="project" value="GO_Central"/>
</dbReference>
<dbReference type="GO" id="GO:0008270">
    <property type="term" value="F:zinc ion binding"/>
    <property type="evidence" value="ECO:0007669"/>
    <property type="project" value="UniProtKB-KW"/>
</dbReference>
<dbReference type="GO" id="GO:0009952">
    <property type="term" value="P:anterior/posterior pattern specification"/>
    <property type="evidence" value="ECO:0007669"/>
    <property type="project" value="Ensembl"/>
</dbReference>
<dbReference type="GO" id="GO:0097190">
    <property type="term" value="P:apoptotic signaling pathway"/>
    <property type="evidence" value="ECO:0007669"/>
    <property type="project" value="Ensembl"/>
</dbReference>
<dbReference type="GO" id="GO:0070301">
    <property type="term" value="P:cellular response to hydrogen peroxide"/>
    <property type="evidence" value="ECO:0007669"/>
    <property type="project" value="Ensembl"/>
</dbReference>
<dbReference type="GO" id="GO:0006338">
    <property type="term" value="P:chromatin remodeling"/>
    <property type="evidence" value="ECO:0000315"/>
    <property type="project" value="UniProtKB"/>
</dbReference>
<dbReference type="GO" id="GO:0048704">
    <property type="term" value="P:embryonic skeletal system morphogenesis"/>
    <property type="evidence" value="ECO:0007669"/>
    <property type="project" value="Ensembl"/>
</dbReference>
<dbReference type="GO" id="GO:0001701">
    <property type="term" value="P:in utero embryonic development"/>
    <property type="evidence" value="ECO:0007669"/>
    <property type="project" value="Ensembl"/>
</dbReference>
<dbReference type="GO" id="GO:2001234">
    <property type="term" value="P:negative regulation of apoptotic signaling pathway"/>
    <property type="evidence" value="ECO:0007669"/>
    <property type="project" value="Ensembl"/>
</dbReference>
<dbReference type="GO" id="GO:0000122">
    <property type="term" value="P:negative regulation of transcription by RNA polymerase II"/>
    <property type="evidence" value="ECO:0000315"/>
    <property type="project" value="UniProtKB"/>
</dbReference>
<dbReference type="CDD" id="cd17164">
    <property type="entry name" value="RAWUL_PCGF2"/>
    <property type="match status" value="1"/>
</dbReference>
<dbReference type="CDD" id="cd16736">
    <property type="entry name" value="RING-HC_PCGF4"/>
    <property type="match status" value="1"/>
</dbReference>
<dbReference type="FunFam" id="3.30.40.10:FF:000082">
    <property type="entry name" value="Polycomb group ring finger 2"/>
    <property type="match status" value="1"/>
</dbReference>
<dbReference type="FunFam" id="3.10.20.90:FF:000170">
    <property type="entry name" value="Polycomb group RING finger protein 2"/>
    <property type="match status" value="1"/>
</dbReference>
<dbReference type="Gene3D" id="3.10.20.90">
    <property type="entry name" value="Phosphatidylinositol 3-kinase Catalytic Subunit, Chain A, domain 1"/>
    <property type="match status" value="1"/>
</dbReference>
<dbReference type="Gene3D" id="3.30.40.10">
    <property type="entry name" value="Zinc/RING finger domain, C3HC4 (zinc finger)"/>
    <property type="match status" value="1"/>
</dbReference>
<dbReference type="InterPro" id="IPR032443">
    <property type="entry name" value="RAWUL"/>
</dbReference>
<dbReference type="InterPro" id="IPR001841">
    <property type="entry name" value="Znf_RING"/>
</dbReference>
<dbReference type="InterPro" id="IPR013083">
    <property type="entry name" value="Znf_RING/FYVE/PHD"/>
</dbReference>
<dbReference type="InterPro" id="IPR017907">
    <property type="entry name" value="Znf_RING_CS"/>
</dbReference>
<dbReference type="PANTHER" id="PTHR10825:SF31">
    <property type="entry name" value="POLYCOMB GROUP RING FINGER PROTEIN 2"/>
    <property type="match status" value="1"/>
</dbReference>
<dbReference type="PANTHER" id="PTHR10825">
    <property type="entry name" value="RING FINGER DOMAIN-CONTAINING, POLYCOMB GROUP COMPONENT"/>
    <property type="match status" value="1"/>
</dbReference>
<dbReference type="Pfam" id="PF16207">
    <property type="entry name" value="RAWUL"/>
    <property type="match status" value="1"/>
</dbReference>
<dbReference type="Pfam" id="PF13923">
    <property type="entry name" value="zf-C3HC4_2"/>
    <property type="match status" value="1"/>
</dbReference>
<dbReference type="SMART" id="SM00184">
    <property type="entry name" value="RING"/>
    <property type="match status" value="1"/>
</dbReference>
<dbReference type="SUPFAM" id="SSF57850">
    <property type="entry name" value="RING/U-box"/>
    <property type="match status" value="1"/>
</dbReference>
<dbReference type="PROSITE" id="PS00518">
    <property type="entry name" value="ZF_RING_1"/>
    <property type="match status" value="1"/>
</dbReference>
<dbReference type="PROSITE" id="PS50089">
    <property type="entry name" value="ZF_RING_2"/>
    <property type="match status" value="1"/>
</dbReference>
<gene>
    <name type="primary">PCGF2</name>
    <name type="synonym">MEL18</name>
    <name type="synonym">RNF110</name>
    <name type="synonym">ZNF144</name>
</gene>
<sequence>MHRTTRIKITELNPHLMCALCGGYFIDATTIVECLHSFCKTCIVRYLETNKYCPMCDVQVHKTRPLLSIRSDKTLQDIVYKLVPGLFKDEMKRRRDFYAAYPLTEVPNGSNEDRGEVLEQEKGALSDDEIVSLSIEFYEGARDRDEKKGPLENGDGDKEKTGVRFLRCPAAMTVMHLAKFLRNKMDVPSKYKVEVLYEDEPLKEYYTLMDIAYIYPWRRNGPLPLKYRVQPACKRLTLATVPTPSEGTNTSGASECESVSDKAPSPATLPATSSSLPSPATPSHGSPSSHGPPATHPTSPTPPSTASGATTAANGGSLNCLQTPSSTSRGRKMTVNGAPVPPLT</sequence>